<evidence type="ECO:0000250" key="1">
    <source>
        <dbReference type="UniProtKB" id="Q96S82"/>
    </source>
</evidence>
<evidence type="ECO:0000255" key="2">
    <source>
        <dbReference type="PROSITE-ProRule" id="PRU00212"/>
    </source>
</evidence>
<evidence type="ECO:0000255" key="3">
    <source>
        <dbReference type="PROSITE-ProRule" id="PRU00214"/>
    </source>
</evidence>
<evidence type="ECO:0000256" key="4">
    <source>
        <dbReference type="SAM" id="MobiDB-lite"/>
    </source>
</evidence>
<evidence type="ECO:0000305" key="5"/>
<evidence type="ECO:0007744" key="6">
    <source>
    </source>
</evidence>
<evidence type="ECO:0007829" key="7">
    <source>
        <dbReference type="PDB" id="1X1M"/>
    </source>
</evidence>
<reference key="1">
    <citation type="journal article" date="2005" name="Science">
        <title>The transcriptional landscape of the mammalian genome.</title>
        <authorList>
            <person name="Carninci P."/>
            <person name="Kasukawa T."/>
            <person name="Katayama S."/>
            <person name="Gough J."/>
            <person name="Frith M.C."/>
            <person name="Maeda N."/>
            <person name="Oyama R."/>
            <person name="Ravasi T."/>
            <person name="Lenhard B."/>
            <person name="Wells C."/>
            <person name="Kodzius R."/>
            <person name="Shimokawa K."/>
            <person name="Bajic V.B."/>
            <person name="Brenner S.E."/>
            <person name="Batalov S."/>
            <person name="Forrest A.R."/>
            <person name="Zavolan M."/>
            <person name="Davis M.J."/>
            <person name="Wilming L.G."/>
            <person name="Aidinis V."/>
            <person name="Allen J.E."/>
            <person name="Ambesi-Impiombato A."/>
            <person name="Apweiler R."/>
            <person name="Aturaliya R.N."/>
            <person name="Bailey T.L."/>
            <person name="Bansal M."/>
            <person name="Baxter L."/>
            <person name="Beisel K.W."/>
            <person name="Bersano T."/>
            <person name="Bono H."/>
            <person name="Chalk A.M."/>
            <person name="Chiu K.P."/>
            <person name="Choudhary V."/>
            <person name="Christoffels A."/>
            <person name="Clutterbuck D.R."/>
            <person name="Crowe M.L."/>
            <person name="Dalla E."/>
            <person name="Dalrymple B.P."/>
            <person name="de Bono B."/>
            <person name="Della Gatta G."/>
            <person name="di Bernardo D."/>
            <person name="Down T."/>
            <person name="Engstrom P."/>
            <person name="Fagiolini M."/>
            <person name="Faulkner G."/>
            <person name="Fletcher C.F."/>
            <person name="Fukushima T."/>
            <person name="Furuno M."/>
            <person name="Futaki S."/>
            <person name="Gariboldi M."/>
            <person name="Georgii-Hemming P."/>
            <person name="Gingeras T.R."/>
            <person name="Gojobori T."/>
            <person name="Green R.E."/>
            <person name="Gustincich S."/>
            <person name="Harbers M."/>
            <person name="Hayashi Y."/>
            <person name="Hensch T.K."/>
            <person name="Hirokawa N."/>
            <person name="Hill D."/>
            <person name="Huminiecki L."/>
            <person name="Iacono M."/>
            <person name="Ikeo K."/>
            <person name="Iwama A."/>
            <person name="Ishikawa T."/>
            <person name="Jakt M."/>
            <person name="Kanapin A."/>
            <person name="Katoh M."/>
            <person name="Kawasawa Y."/>
            <person name="Kelso J."/>
            <person name="Kitamura H."/>
            <person name="Kitano H."/>
            <person name="Kollias G."/>
            <person name="Krishnan S.P."/>
            <person name="Kruger A."/>
            <person name="Kummerfeld S.K."/>
            <person name="Kurochkin I.V."/>
            <person name="Lareau L.F."/>
            <person name="Lazarevic D."/>
            <person name="Lipovich L."/>
            <person name="Liu J."/>
            <person name="Liuni S."/>
            <person name="McWilliam S."/>
            <person name="Madan Babu M."/>
            <person name="Madera M."/>
            <person name="Marchionni L."/>
            <person name="Matsuda H."/>
            <person name="Matsuzawa S."/>
            <person name="Miki H."/>
            <person name="Mignone F."/>
            <person name="Miyake S."/>
            <person name="Morris K."/>
            <person name="Mottagui-Tabar S."/>
            <person name="Mulder N."/>
            <person name="Nakano N."/>
            <person name="Nakauchi H."/>
            <person name="Ng P."/>
            <person name="Nilsson R."/>
            <person name="Nishiguchi S."/>
            <person name="Nishikawa S."/>
            <person name="Nori F."/>
            <person name="Ohara O."/>
            <person name="Okazaki Y."/>
            <person name="Orlando V."/>
            <person name="Pang K.C."/>
            <person name="Pavan W.J."/>
            <person name="Pavesi G."/>
            <person name="Pesole G."/>
            <person name="Petrovsky N."/>
            <person name="Piazza S."/>
            <person name="Reed J."/>
            <person name="Reid J.F."/>
            <person name="Ring B.Z."/>
            <person name="Ringwald M."/>
            <person name="Rost B."/>
            <person name="Ruan Y."/>
            <person name="Salzberg S.L."/>
            <person name="Sandelin A."/>
            <person name="Schneider C."/>
            <person name="Schoenbach C."/>
            <person name="Sekiguchi K."/>
            <person name="Semple C.A."/>
            <person name="Seno S."/>
            <person name="Sessa L."/>
            <person name="Sheng Y."/>
            <person name="Shibata Y."/>
            <person name="Shimada H."/>
            <person name="Shimada K."/>
            <person name="Silva D."/>
            <person name="Sinclair B."/>
            <person name="Sperling S."/>
            <person name="Stupka E."/>
            <person name="Sugiura K."/>
            <person name="Sultana R."/>
            <person name="Takenaka Y."/>
            <person name="Taki K."/>
            <person name="Tammoja K."/>
            <person name="Tan S.L."/>
            <person name="Tang S."/>
            <person name="Taylor M.S."/>
            <person name="Tegner J."/>
            <person name="Teichmann S.A."/>
            <person name="Ueda H.R."/>
            <person name="van Nimwegen E."/>
            <person name="Verardo R."/>
            <person name="Wei C.L."/>
            <person name="Yagi K."/>
            <person name="Yamanishi H."/>
            <person name="Zabarovsky E."/>
            <person name="Zhu S."/>
            <person name="Zimmer A."/>
            <person name="Hide W."/>
            <person name="Bult C."/>
            <person name="Grimmond S.M."/>
            <person name="Teasdale R.D."/>
            <person name="Liu E.T."/>
            <person name="Brusic V."/>
            <person name="Quackenbush J."/>
            <person name="Wahlestedt C."/>
            <person name="Mattick J.S."/>
            <person name="Hume D.A."/>
            <person name="Kai C."/>
            <person name="Sasaki D."/>
            <person name="Tomaru Y."/>
            <person name="Fukuda S."/>
            <person name="Kanamori-Katayama M."/>
            <person name="Suzuki M."/>
            <person name="Aoki J."/>
            <person name="Arakawa T."/>
            <person name="Iida J."/>
            <person name="Imamura K."/>
            <person name="Itoh M."/>
            <person name="Kato T."/>
            <person name="Kawaji H."/>
            <person name="Kawagashira N."/>
            <person name="Kawashima T."/>
            <person name="Kojima M."/>
            <person name="Kondo S."/>
            <person name="Konno H."/>
            <person name="Nakano K."/>
            <person name="Ninomiya N."/>
            <person name="Nishio T."/>
            <person name="Okada M."/>
            <person name="Plessy C."/>
            <person name="Shibata K."/>
            <person name="Shiraki T."/>
            <person name="Suzuki S."/>
            <person name="Tagami M."/>
            <person name="Waki K."/>
            <person name="Watahiki A."/>
            <person name="Okamura-Oho Y."/>
            <person name="Suzuki H."/>
            <person name="Kawai J."/>
            <person name="Hayashizaki Y."/>
        </authorList>
    </citation>
    <scope>NUCLEOTIDE SEQUENCE [LARGE SCALE MRNA]</scope>
    <source>
        <strain>C57BL/6J</strain>
        <tissue>Tongue</tissue>
    </source>
</reference>
<reference key="2">
    <citation type="journal article" date="2009" name="PLoS Biol.">
        <title>Lineage-specific biology revealed by a finished genome assembly of the mouse.</title>
        <authorList>
            <person name="Church D.M."/>
            <person name="Goodstadt L."/>
            <person name="Hillier L.W."/>
            <person name="Zody M.C."/>
            <person name="Goldstein S."/>
            <person name="She X."/>
            <person name="Bult C.J."/>
            <person name="Agarwala R."/>
            <person name="Cherry J.L."/>
            <person name="DiCuccio M."/>
            <person name="Hlavina W."/>
            <person name="Kapustin Y."/>
            <person name="Meric P."/>
            <person name="Maglott D."/>
            <person name="Birtle Z."/>
            <person name="Marques A.C."/>
            <person name="Graves T."/>
            <person name="Zhou S."/>
            <person name="Teague B."/>
            <person name="Potamousis K."/>
            <person name="Churas C."/>
            <person name="Place M."/>
            <person name="Herschleb J."/>
            <person name="Runnheim R."/>
            <person name="Forrest D."/>
            <person name="Amos-Landgraf J."/>
            <person name="Schwartz D.C."/>
            <person name="Cheng Z."/>
            <person name="Lindblad-Toh K."/>
            <person name="Eichler E.E."/>
            <person name="Ponting C.P."/>
        </authorList>
    </citation>
    <scope>NUCLEOTIDE SEQUENCE [LARGE SCALE GENOMIC DNA]</scope>
    <source>
        <strain>C57BL/6J</strain>
    </source>
</reference>
<reference key="3">
    <citation type="journal article" date="2004" name="Genome Res.">
        <title>The status, quality, and expansion of the NIH full-length cDNA project: the Mammalian Gene Collection (MGC).</title>
        <authorList>
            <consortium name="The MGC Project Team"/>
        </authorList>
    </citation>
    <scope>NUCLEOTIDE SEQUENCE [LARGE SCALE MRNA]</scope>
    <source>
        <tissue>Salivary gland</tissue>
    </source>
</reference>
<reference key="4">
    <citation type="journal article" date="2010" name="Cell">
        <title>A tissue-specific atlas of mouse protein phosphorylation and expression.</title>
        <authorList>
            <person name="Huttlin E.L."/>
            <person name="Jedrychowski M.P."/>
            <person name="Elias J.E."/>
            <person name="Goswami T."/>
            <person name="Rad R."/>
            <person name="Beausoleil S.A."/>
            <person name="Villen J."/>
            <person name="Haas W."/>
            <person name="Sowa M.E."/>
            <person name="Gygi S.P."/>
        </authorList>
    </citation>
    <scope>PHOSPHORYLATION [LARGE SCALE ANALYSIS] AT SER-230</scope>
    <scope>IDENTIFICATION BY MASS SPECTROMETRY [LARGE SCALE ANALYSIS]</scope>
    <source>
        <tissue>Brain</tissue>
        <tissue>Kidney</tissue>
        <tissue>Liver</tissue>
        <tissue>Lung</tissue>
        <tissue>Pancreas</tissue>
        <tissue>Spleen</tissue>
        <tissue>Testis</tissue>
    </source>
</reference>
<reference key="5">
    <citation type="submission" date="2005-10" db="PDB data bank">
        <title>Solution structure of the N-terminal ubiquitin-like domain in mouse ubiquitin-like protein SB132.</title>
        <authorList>
            <consortium name="RIKEN structural genomics initiative (RSGI)"/>
        </authorList>
    </citation>
    <scope>STRUCTURE BY NMR OF 1-94</scope>
</reference>
<gene>
    <name type="primary">Ubl7</name>
</gene>
<proteinExistence type="evidence at protein level"/>
<dbReference type="EMBL" id="AK009025">
    <property type="protein sequence ID" value="BAB26033.1"/>
    <property type="molecule type" value="mRNA"/>
</dbReference>
<dbReference type="EMBL" id="AC122534">
    <property type="status" value="NOT_ANNOTATED_CDS"/>
    <property type="molecule type" value="Genomic_DNA"/>
</dbReference>
<dbReference type="EMBL" id="BC016456">
    <property type="protein sequence ID" value="AAH16456.1"/>
    <property type="molecule type" value="mRNA"/>
</dbReference>
<dbReference type="CCDS" id="CCDS23234.1"/>
<dbReference type="RefSeq" id="NP_001116345.1">
    <property type="nucleotide sequence ID" value="NM_001122873.2"/>
</dbReference>
<dbReference type="RefSeq" id="NP_001400430.1">
    <property type="nucleotide sequence ID" value="NM_001413501.1"/>
</dbReference>
<dbReference type="RefSeq" id="NP_001400431.1">
    <property type="nucleotide sequence ID" value="NM_001413502.1"/>
</dbReference>
<dbReference type="RefSeq" id="NP_001400432.1">
    <property type="nucleotide sequence ID" value="NM_001413503.1"/>
</dbReference>
<dbReference type="RefSeq" id="NP_001400433.1">
    <property type="nucleotide sequence ID" value="NM_001413504.1"/>
</dbReference>
<dbReference type="RefSeq" id="NP_001400434.1">
    <property type="nucleotide sequence ID" value="NM_001413505.1"/>
</dbReference>
<dbReference type="RefSeq" id="NP_001400435.1">
    <property type="nucleotide sequence ID" value="NM_001413506.1"/>
</dbReference>
<dbReference type="RefSeq" id="NP_001400436.1">
    <property type="nucleotide sequence ID" value="NM_001413507.1"/>
</dbReference>
<dbReference type="RefSeq" id="NP_001400437.1">
    <property type="nucleotide sequence ID" value="NM_001413508.1"/>
</dbReference>
<dbReference type="RefSeq" id="NP_001400438.1">
    <property type="nucleotide sequence ID" value="NM_001413509.1"/>
</dbReference>
<dbReference type="RefSeq" id="NP_001400439.1">
    <property type="nucleotide sequence ID" value="NM_001413510.1"/>
</dbReference>
<dbReference type="RefSeq" id="NP_081362.2">
    <property type="nucleotide sequence ID" value="NM_027086.4"/>
</dbReference>
<dbReference type="RefSeq" id="XP_006511469.1">
    <property type="nucleotide sequence ID" value="XM_006511406.3"/>
</dbReference>
<dbReference type="RefSeq" id="XP_006511470.1">
    <property type="nucleotide sequence ID" value="XM_006511407.2"/>
</dbReference>
<dbReference type="RefSeq" id="XP_006511471.1">
    <property type="nucleotide sequence ID" value="XM_006511408.2"/>
</dbReference>
<dbReference type="PDB" id="1X1M">
    <property type="method" value="NMR"/>
    <property type="chains" value="A=1-94"/>
</dbReference>
<dbReference type="PDBsum" id="1X1M"/>
<dbReference type="BMRB" id="Q91W67"/>
<dbReference type="SMR" id="Q91W67"/>
<dbReference type="BioGRID" id="213461">
    <property type="interactions" value="6"/>
</dbReference>
<dbReference type="FunCoup" id="Q91W67">
    <property type="interactions" value="1116"/>
</dbReference>
<dbReference type="STRING" id="10090.ENSMUSP00000149748"/>
<dbReference type="GlyGen" id="Q91W67">
    <property type="glycosylation" value="2 sites"/>
</dbReference>
<dbReference type="iPTMnet" id="Q91W67"/>
<dbReference type="PhosphoSitePlus" id="Q91W67"/>
<dbReference type="jPOST" id="Q91W67"/>
<dbReference type="PaxDb" id="10090-ENSMUSP00000126019"/>
<dbReference type="ProteomicsDB" id="297790"/>
<dbReference type="Pumba" id="Q91W67"/>
<dbReference type="Antibodypedia" id="26955">
    <property type="antibodies" value="118 antibodies from 23 providers"/>
</dbReference>
<dbReference type="DNASU" id="69459"/>
<dbReference type="Ensembl" id="ENSMUST00000163329.2">
    <property type="protein sequence ID" value="ENSMUSP00000126019.2"/>
    <property type="gene ID" value="ENSMUSG00000055720.11"/>
</dbReference>
<dbReference type="Ensembl" id="ENSMUST00000216841.2">
    <property type="protein sequence ID" value="ENSMUSP00000149748.2"/>
    <property type="gene ID" value="ENSMUSG00000055720.11"/>
</dbReference>
<dbReference type="Ensembl" id="ENSMUST00000216925.2">
    <property type="protein sequence ID" value="ENSMUSP00000150925.2"/>
    <property type="gene ID" value="ENSMUSG00000055720.11"/>
</dbReference>
<dbReference type="GeneID" id="69459"/>
<dbReference type="KEGG" id="mmu:69459"/>
<dbReference type="UCSC" id="uc009pvx.2">
    <property type="organism name" value="mouse"/>
</dbReference>
<dbReference type="AGR" id="MGI:1916709"/>
<dbReference type="CTD" id="84993"/>
<dbReference type="MGI" id="MGI:1916709">
    <property type="gene designation" value="Ubl7"/>
</dbReference>
<dbReference type="VEuPathDB" id="HostDB:ENSMUSG00000055720"/>
<dbReference type="eggNOG" id="KOG0010">
    <property type="taxonomic scope" value="Eukaryota"/>
</dbReference>
<dbReference type="GeneTree" id="ENSGT00390000015967"/>
<dbReference type="HOGENOM" id="CLU_036815_2_0_1"/>
<dbReference type="InParanoid" id="Q91W67"/>
<dbReference type="OMA" id="HAINLLM"/>
<dbReference type="OrthoDB" id="10016665at2759"/>
<dbReference type="PhylomeDB" id="Q91W67"/>
<dbReference type="TreeFam" id="TF327176"/>
<dbReference type="BioGRID-ORCS" id="69459">
    <property type="hits" value="2 hits in 76 CRISPR screens"/>
</dbReference>
<dbReference type="ChiTaRS" id="Ubl7">
    <property type="organism name" value="mouse"/>
</dbReference>
<dbReference type="EvolutionaryTrace" id="Q91W67"/>
<dbReference type="PRO" id="PR:Q91W67"/>
<dbReference type="Proteomes" id="UP000000589">
    <property type="component" value="Chromosome 9"/>
</dbReference>
<dbReference type="RNAct" id="Q91W67">
    <property type="molecule type" value="protein"/>
</dbReference>
<dbReference type="Bgee" id="ENSMUSG00000055720">
    <property type="expression patterns" value="Expressed in spermatid and 220 other cell types or tissues"/>
</dbReference>
<dbReference type="ExpressionAtlas" id="Q91W67">
    <property type="expression patterns" value="baseline and differential"/>
</dbReference>
<dbReference type="GO" id="GO:0005737">
    <property type="term" value="C:cytoplasm"/>
    <property type="evidence" value="ECO:0007669"/>
    <property type="project" value="Ensembl"/>
</dbReference>
<dbReference type="GO" id="GO:0030674">
    <property type="term" value="F:protein-macromolecule adaptor activity"/>
    <property type="evidence" value="ECO:0007669"/>
    <property type="project" value="Ensembl"/>
</dbReference>
<dbReference type="GO" id="GO:0140374">
    <property type="term" value="P:antiviral innate immune response"/>
    <property type="evidence" value="ECO:0007669"/>
    <property type="project" value="Ensembl"/>
</dbReference>
<dbReference type="CDD" id="cd14326">
    <property type="entry name" value="UBA_UBL7"/>
    <property type="match status" value="1"/>
</dbReference>
<dbReference type="CDD" id="cd01815">
    <property type="entry name" value="Ubl_UBL7"/>
    <property type="match status" value="1"/>
</dbReference>
<dbReference type="FunFam" id="1.10.8.10:FF:000192">
    <property type="entry name" value="Ubiquitin-like 7b (bone marrow stromal cell-derived)"/>
    <property type="match status" value="1"/>
</dbReference>
<dbReference type="FunFam" id="3.10.20.90:FF:000139">
    <property type="entry name" value="ubiquitin-like protein 7"/>
    <property type="match status" value="1"/>
</dbReference>
<dbReference type="Gene3D" id="1.10.8.10">
    <property type="entry name" value="DNA helicase RuvA subunit, C-terminal domain"/>
    <property type="match status" value="1"/>
</dbReference>
<dbReference type="Gene3D" id="3.10.20.90">
    <property type="entry name" value="Phosphatidylinositol 3-kinase Catalytic Subunit, Chain A, domain 1"/>
    <property type="match status" value="1"/>
</dbReference>
<dbReference type="InterPro" id="IPR015940">
    <property type="entry name" value="UBA"/>
</dbReference>
<dbReference type="InterPro" id="IPR009060">
    <property type="entry name" value="UBA-like_sf"/>
</dbReference>
<dbReference type="InterPro" id="IPR015496">
    <property type="entry name" value="Ubiquilin"/>
</dbReference>
<dbReference type="InterPro" id="IPR000626">
    <property type="entry name" value="Ubiquitin-like_dom"/>
</dbReference>
<dbReference type="InterPro" id="IPR029071">
    <property type="entry name" value="Ubiquitin-like_domsf"/>
</dbReference>
<dbReference type="InterPro" id="IPR047878">
    <property type="entry name" value="UBL7_UBA"/>
</dbReference>
<dbReference type="InterPro" id="IPR047877">
    <property type="entry name" value="UBL7_Ubl"/>
</dbReference>
<dbReference type="PANTHER" id="PTHR10677">
    <property type="entry name" value="UBIQUILIN"/>
    <property type="match status" value="1"/>
</dbReference>
<dbReference type="PANTHER" id="PTHR10677:SF25">
    <property type="entry name" value="UBIQUITIN-LIKE PROTEIN 7"/>
    <property type="match status" value="1"/>
</dbReference>
<dbReference type="Pfam" id="PF00240">
    <property type="entry name" value="ubiquitin"/>
    <property type="match status" value="1"/>
</dbReference>
<dbReference type="SMART" id="SM00165">
    <property type="entry name" value="UBA"/>
    <property type="match status" value="1"/>
</dbReference>
<dbReference type="SMART" id="SM00213">
    <property type="entry name" value="UBQ"/>
    <property type="match status" value="1"/>
</dbReference>
<dbReference type="SUPFAM" id="SSF46934">
    <property type="entry name" value="UBA-like"/>
    <property type="match status" value="1"/>
</dbReference>
<dbReference type="SUPFAM" id="SSF54236">
    <property type="entry name" value="Ubiquitin-like"/>
    <property type="match status" value="1"/>
</dbReference>
<dbReference type="PROSITE" id="PS50030">
    <property type="entry name" value="UBA"/>
    <property type="match status" value="1"/>
</dbReference>
<dbReference type="PROSITE" id="PS50053">
    <property type="entry name" value="UBIQUITIN_2"/>
    <property type="match status" value="1"/>
</dbReference>
<name>UBL7_MOUSE</name>
<comment type="function">
    <text evidence="1">Interferon-stimulated protein that positively regulates RNA virus-triggered innate immune signaling. Mechanistically, promotes 'Lys-27'-linked polyubiquitination of MAVS through TRIM21 leading to enhanced the IFN signaling pathway.</text>
</comment>
<comment type="subunit">
    <text evidence="1">Binds ubiquitin. Interacts with MAVS; this interaction enhances TRIM21-dependent 'Lys-27'-linked polyubiquitination of MAVS.</text>
</comment>
<comment type="PTM">
    <text evidence="1">Deubiquitinated by OTUD4 which stabilizes UBL7 expression.</text>
</comment>
<organism>
    <name type="scientific">Mus musculus</name>
    <name type="common">Mouse</name>
    <dbReference type="NCBI Taxonomy" id="10090"/>
    <lineage>
        <taxon>Eukaryota</taxon>
        <taxon>Metazoa</taxon>
        <taxon>Chordata</taxon>
        <taxon>Craniata</taxon>
        <taxon>Vertebrata</taxon>
        <taxon>Euteleostomi</taxon>
        <taxon>Mammalia</taxon>
        <taxon>Eutheria</taxon>
        <taxon>Euarchontoglires</taxon>
        <taxon>Glires</taxon>
        <taxon>Rodentia</taxon>
        <taxon>Myomorpha</taxon>
        <taxon>Muroidea</taxon>
        <taxon>Muridae</taxon>
        <taxon>Murinae</taxon>
        <taxon>Mus</taxon>
        <taxon>Mus</taxon>
    </lineage>
</organism>
<feature type="chain" id="PRO_0000211022" description="Ubiquitin-like protein 7">
    <location>
        <begin position="1"/>
        <end position="380"/>
    </location>
</feature>
<feature type="domain" description="Ubiquitin-like" evidence="3">
    <location>
        <begin position="18"/>
        <end position="98"/>
    </location>
</feature>
<feature type="domain" description="UBA" evidence="2">
    <location>
        <begin position="333"/>
        <end position="377"/>
    </location>
</feature>
<feature type="region of interest" description="Disordered" evidence="4">
    <location>
        <begin position="200"/>
        <end position="313"/>
    </location>
</feature>
<feature type="compositionally biased region" description="Low complexity" evidence="4">
    <location>
        <begin position="206"/>
        <end position="221"/>
    </location>
</feature>
<feature type="compositionally biased region" description="Low complexity" evidence="4">
    <location>
        <begin position="239"/>
        <end position="253"/>
    </location>
</feature>
<feature type="compositionally biased region" description="Low complexity" evidence="4">
    <location>
        <begin position="270"/>
        <end position="293"/>
    </location>
</feature>
<feature type="compositionally biased region" description="Polar residues" evidence="4">
    <location>
        <begin position="294"/>
        <end position="313"/>
    </location>
</feature>
<feature type="modified residue" description="Phosphoserine" evidence="6">
    <location>
        <position position="230"/>
    </location>
</feature>
<feature type="sequence conflict" description="In Ref. 1; BAB26033." evidence="5" ref="1">
    <original>L</original>
    <variation>P</variation>
    <location>
        <position position="35"/>
    </location>
</feature>
<feature type="sequence conflict" description="In Ref. 1; BAB26033." evidence="5" ref="1">
    <original>G</original>
    <variation>A</variation>
    <location>
        <position position="228"/>
    </location>
</feature>
<feature type="sequence conflict" description="In Ref. 1; BAB26033." evidence="5" ref="1">
    <original>Q</original>
    <variation>H</variation>
    <location>
        <position position="331"/>
    </location>
</feature>
<feature type="sequence conflict" description="In Ref. 3; AAH16456." evidence="5" ref="3">
    <original>I</original>
    <variation>S</variation>
    <location>
        <position position="336"/>
    </location>
</feature>
<feature type="strand" evidence="7">
    <location>
        <begin position="8"/>
        <end position="12"/>
    </location>
</feature>
<feature type="strand" evidence="7">
    <location>
        <begin position="21"/>
        <end position="23"/>
    </location>
</feature>
<feature type="helix" evidence="7">
    <location>
        <begin position="40"/>
        <end position="50"/>
    </location>
</feature>
<feature type="turn" evidence="7">
    <location>
        <begin position="52"/>
        <end position="54"/>
    </location>
</feature>
<feature type="strand" evidence="7">
    <location>
        <begin position="58"/>
        <end position="65"/>
    </location>
</feature>
<feature type="helix" evidence="7">
    <location>
        <begin position="76"/>
        <end position="79"/>
    </location>
</feature>
<feature type="strand" evidence="7">
    <location>
        <begin position="86"/>
        <end position="93"/>
    </location>
</feature>
<protein>
    <recommendedName>
        <fullName>Ubiquitin-like protein 7</fullName>
    </recommendedName>
</protein>
<keyword id="KW-0002">3D-structure</keyword>
<keyword id="KW-0391">Immunity</keyword>
<keyword id="KW-0399">Innate immunity</keyword>
<keyword id="KW-0597">Phosphoprotein</keyword>
<keyword id="KW-1185">Reference proteome</keyword>
<keyword id="KW-0833">Ubl conjugation pathway</keyword>
<accession>Q91W67</accession>
<accession>E9Q1S0</accession>
<accession>Q9D7P5</accession>
<sequence length="380" mass="40433">MSLSDWHLAVKLADQPLAPKSILQLPETELGEYSLGGYSISFLKQLIAGKLQESVPDPELIDLIYCGRKLKDDQTLDFYGIQPGSTVHVLRKSWPEPDQKPEPVDKVAALREFRVLHTALHSSSSYREAVFKMLSNKESLDQIIVATPGLSSDPIALGVLQDKDLFSVFADPNMLDTLVPAHPALVNAIILVLHSVAGSTPMPGADSSSRSMPSSSYRDMPGGFLFDGLSDDEDDFHPSTRSTPSSSTPSSRPASLGYSGAAGPRPITQSELATALALASTPESSSHTPTPGTQGHSSGTSPMSSGVQSGTPITNDLFSQALQHALQASGQPSLQIQWQPQLQQLRDMGIQDDELSLRALQATGGDIQAALELIFAGGAP</sequence>